<dbReference type="EMBL" id="X55992">
    <property type="protein sequence ID" value="CAA39464.1"/>
    <property type="molecule type" value="mRNA"/>
</dbReference>
<dbReference type="SMR" id="P21770"/>
<dbReference type="GO" id="GO:0042025">
    <property type="term" value="C:host cell nucleus"/>
    <property type="evidence" value="ECO:0007669"/>
    <property type="project" value="UniProtKB-SubCell"/>
</dbReference>
<dbReference type="GO" id="GO:0044423">
    <property type="term" value="C:virion component"/>
    <property type="evidence" value="ECO:0007669"/>
    <property type="project" value="UniProtKB-UniRule"/>
</dbReference>
<dbReference type="GO" id="GO:0003723">
    <property type="term" value="F:RNA binding"/>
    <property type="evidence" value="ECO:0007669"/>
    <property type="project" value="UniProtKB-UniRule"/>
</dbReference>
<dbReference type="GO" id="GO:0003968">
    <property type="term" value="F:RNA-directed RNA polymerase activity"/>
    <property type="evidence" value="ECO:0007669"/>
    <property type="project" value="UniProtKB-UniRule"/>
</dbReference>
<dbReference type="GO" id="GO:0006370">
    <property type="term" value="P:7-methylguanosine mRNA capping"/>
    <property type="evidence" value="ECO:0007669"/>
    <property type="project" value="UniProtKB-UniRule"/>
</dbReference>
<dbReference type="GO" id="GO:0075526">
    <property type="term" value="P:cap snatching"/>
    <property type="evidence" value="ECO:0007669"/>
    <property type="project" value="UniProtKB-UniRule"/>
</dbReference>
<dbReference type="GO" id="GO:0006351">
    <property type="term" value="P:DNA-templated transcription"/>
    <property type="evidence" value="ECO:0007669"/>
    <property type="project" value="UniProtKB-UniRule"/>
</dbReference>
<dbReference type="GO" id="GO:0039657">
    <property type="term" value="P:symbiont-mediated suppression of host gene expression"/>
    <property type="evidence" value="ECO:0007669"/>
    <property type="project" value="UniProtKB-KW"/>
</dbReference>
<dbReference type="GO" id="GO:0039523">
    <property type="term" value="P:symbiont-mediated suppression of host mRNA transcription via inhibition of RNA polymerase II activity"/>
    <property type="evidence" value="ECO:0007669"/>
    <property type="project" value="UniProtKB-UniRule"/>
</dbReference>
<dbReference type="GO" id="GO:0039694">
    <property type="term" value="P:viral RNA genome replication"/>
    <property type="evidence" value="ECO:0007669"/>
    <property type="project" value="InterPro"/>
</dbReference>
<dbReference type="HAMAP" id="MF_04062">
    <property type="entry name" value="INV_PB2"/>
    <property type="match status" value="1"/>
</dbReference>
<dbReference type="InterPro" id="IPR049110">
    <property type="entry name" value="Flu_PB2_2nd"/>
</dbReference>
<dbReference type="InterPro" id="IPR049114">
    <property type="entry name" value="Flu_PB2_6th"/>
</dbReference>
<dbReference type="InterPro" id="IPR049115">
    <property type="entry name" value="Flu_PB2_C"/>
</dbReference>
<dbReference type="InterPro" id="IPR048298">
    <property type="entry name" value="Flu_PB2_CAP-bd"/>
</dbReference>
<dbReference type="InterPro" id="IPR049111">
    <property type="entry name" value="Flu_PB2_middle"/>
</dbReference>
<dbReference type="InterPro" id="IPR049106">
    <property type="entry name" value="Flu_PB2_N"/>
</dbReference>
<dbReference type="InterPro" id="IPR001591">
    <property type="entry name" value="INV_PB2"/>
</dbReference>
<dbReference type="InterPro" id="IPR049113">
    <property type="entry name" value="PB2_helical"/>
</dbReference>
<dbReference type="Pfam" id="PF20947">
    <property type="entry name" value="Flu_PB2_1st"/>
    <property type="match status" value="1"/>
</dbReference>
<dbReference type="Pfam" id="PF20948">
    <property type="entry name" value="Flu_PB2_2nd"/>
    <property type="match status" value="1"/>
</dbReference>
<dbReference type="Pfam" id="PF20949">
    <property type="entry name" value="Flu_PB2_3rd"/>
    <property type="match status" value="1"/>
</dbReference>
<dbReference type="Pfam" id="PF20950">
    <property type="entry name" value="Flu_PB2_4th"/>
    <property type="match status" value="1"/>
</dbReference>
<dbReference type="Pfam" id="PF00604">
    <property type="entry name" value="Flu_PB2_5th"/>
    <property type="match status" value="1"/>
</dbReference>
<dbReference type="Pfam" id="PF20951">
    <property type="entry name" value="Flu_PB2_6th"/>
    <property type="match status" value="1"/>
</dbReference>
<dbReference type="Pfam" id="PF20952">
    <property type="entry name" value="Flu_PB2_7th"/>
    <property type="match status" value="1"/>
</dbReference>
<accession>P21770</accession>
<sequence>MSLLLTIAKEYKRLCQDAKAAQMMTVGTVSNYTTFKKWTTSRKEKNPSLRMRWAMSSKFPIIANKRMLEEAQIPKEHNNVALWEDTEDVSKRDHVLASASCINYWNFCGPCVNNSEVIKEVYKSRFGRLERRKEIMWKELRFTLVDRQRRRVDTQPVEQRLRTGEIKDLQMWTLFEDEAPLASKFILDNYGLVKEMRSKFANKPLNKEVVAHMLEKQFNPESRFLPVFGAIRPERMELIHALGGETWIQEANTAGISNVDQRKNDMRAVCRKVCLAANASIMNAKSKLVEYIKSTSMRIGETERKLEELIPETDDVSPEVTLCKSALGGPLGKTLSFGPMLLKKISGSGVKVKDTVYIQGVRAVQFEYWSEQEEFYGEYKSATALFSRKERSLEWITIGGGINEDRKRLLAMCMIFCRDGDYFKDAPATITMADLTTKLGREIPYQYVMMNWIQKSEDNLEALLYSRGIVETNPGKMGSSMGIDGSKRAIKSLRAVTIQSGKIDMPESKEKIHLELSDNLEAFDSSGRIVATILDLPSDKKVTFQDVSFQHPDLAVLRDEKTAITKGYEALIKRLGTGDNDIPSLIAKKDYLSLYNLPEVKLMAPLIRPNRKGVYSRVARKLVSTQVTTGHYSLHELIKVLPFTYFAPKQGMFEGRFFFSNDSFVEPGVNNNVLSWSKADSSKIYCHGIAIRVPLVVGDEHMDTSLALLEGFSVCENDPRAPMVTGQDLIDVGFGQKVRLFVGQGSVRTFKRTASQRAASSDVNKNVKKIKMSN</sequence>
<keyword id="KW-1157">Cap snatching</keyword>
<keyword id="KW-1262">Eukaryotic host gene expression shutoff by virus</keyword>
<keyword id="KW-1191">Eukaryotic host transcription shutoff by virus</keyword>
<keyword id="KW-1190">Host gene expression shutoff by virus</keyword>
<keyword id="KW-1048">Host nucleus</keyword>
<keyword id="KW-0945">Host-virus interaction</keyword>
<keyword id="KW-1104">Inhibition of host RNA polymerase II by virus</keyword>
<keyword id="KW-0506">mRNA capping</keyword>
<keyword id="KW-0507">mRNA processing</keyword>
<keyword id="KW-1195">Viral transcription</keyword>
<keyword id="KW-0946">Virion</keyword>
<reference key="1">
    <citation type="journal article" date="1990" name="Nucleic Acids Res.">
        <title>Sequence of the PB2 homolog of influenza C/Berlin/1/85.</title>
        <authorList>
            <person name="Stompor S."/>
            <person name="Santibanez Koref M."/>
        </authorList>
    </citation>
    <scope>NUCLEOTIDE SEQUENCE [MRNA]</scope>
</reference>
<comment type="function">
    <text evidence="1">Plays an essential role in transcription initiation and cap-stealing mechanism, in which cellular capped pre-mRNAs are used to generate primers for viral transcription. Recognizes and binds a wide range of cap structures of target pre-RNAs which are subsequently cleaved after 10-13 nucleotides by the viral protein PA. Plays a role in the initiation of the viral genome replication and modulates the activity of the ribonucleoprotein (RNP) complex.</text>
</comment>
<comment type="subunit">
    <text evidence="1">Influenza RNA polymerase is composed of three subunits: PB1, PB2 and PA. Interacts (via N-terminus) with PB1 (via C-terminus). Interacts with nucleoprotein NP (via N-terminus).</text>
</comment>
<comment type="subcellular location">
    <subcellularLocation>
        <location evidence="1">Virion</location>
    </subcellularLocation>
    <subcellularLocation>
        <location evidence="1">Host nucleus</location>
    </subcellularLocation>
</comment>
<comment type="similarity">
    <text evidence="1">Belongs to the influenza viruses PB2 family.</text>
</comment>
<name>PB2_INCBE</name>
<feature type="chain" id="PRO_0000078847" description="Polymerase basic protein 2">
    <location>
        <begin position="1"/>
        <end position="774"/>
    </location>
</feature>
<proteinExistence type="evidence at transcript level"/>
<evidence type="ECO:0000255" key="1">
    <source>
        <dbReference type="HAMAP-Rule" id="MF_04062"/>
    </source>
</evidence>
<gene>
    <name evidence="1" type="primary">PB2</name>
</gene>
<organism>
    <name type="scientific">Influenza C virus (strain C/Berlin/1/1985)</name>
    <dbReference type="NCBI Taxonomy" id="11554"/>
    <lineage>
        <taxon>Viruses</taxon>
        <taxon>Riboviria</taxon>
        <taxon>Orthornavirae</taxon>
        <taxon>Negarnaviricota</taxon>
        <taxon>Polyploviricotina</taxon>
        <taxon>Insthoviricetes</taxon>
        <taxon>Articulavirales</taxon>
        <taxon>Orthomyxoviridae</taxon>
        <taxon>Gammainfluenzavirus</taxon>
        <taxon>Gammainfluenzavirus influenzae</taxon>
        <taxon>Influenza C virus</taxon>
    </lineage>
</organism>
<organismHost>
    <name type="scientific">Homo sapiens</name>
    <name type="common">Human</name>
    <dbReference type="NCBI Taxonomy" id="9606"/>
</organismHost>
<organismHost>
    <name type="scientific">Sus scrofa</name>
    <name type="common">Pig</name>
    <dbReference type="NCBI Taxonomy" id="9823"/>
</organismHost>
<protein>
    <recommendedName>
        <fullName evidence="1">Polymerase basic protein 2</fullName>
    </recommendedName>
    <alternativeName>
        <fullName evidence="1">RNA-directed RNA polymerase subunit P3</fullName>
    </alternativeName>
</protein>